<accession>B2BNE6</accession>
<sequence length="269" mass="30594">MSAITPSSEVAAGITTPDFPRDIRPRSIREMHVPPSDPVPDVPIPTNTTGKPVYYIYDGSITRASGQLVRDHSCDGPIHYTDPLWECTLFEHLPPSHPGWPNDCVLPYDHNMSPYHRVPIRTICGFNYWETDRLDSTNASFWPALYKCSGFRRNYPWRYSTDQLLAALDMTPEQLVSAKSCVSVVALLNTMNWTSHHLSGLRPQHVHYCMSDWSVQFTKEDLEVLTPGAWFDGLLRVPVDPRVPAIGLTKEQLWTHPFVILGWLRLALQ</sequence>
<dbReference type="EMBL" id="EF589104">
    <property type="protein sequence ID" value="ABV01046.1"/>
    <property type="molecule type" value="Genomic_RNA"/>
</dbReference>
<dbReference type="RefSeq" id="YP_001837101.1">
    <property type="nucleotide sequence ID" value="NC_010590.1"/>
</dbReference>
<dbReference type="KEGG" id="vg:6218806"/>
<dbReference type="Proteomes" id="UP000001674">
    <property type="component" value="Genome"/>
</dbReference>
<name>VNS4_AQRVG</name>
<feature type="chain" id="PRO_0000404181" description="Non-structural protein 4">
    <location>
        <begin position="1"/>
        <end position="269"/>
    </location>
</feature>
<feature type="region of interest" description="Disordered" evidence="1">
    <location>
        <begin position="1"/>
        <end position="23"/>
    </location>
</feature>
<reference key="1">
    <citation type="journal article" date="2008" name="Virology">
        <title>Complete characterisation of the American grass carp reovirus genome (genus Aquareovirus: family Reoviridae) reveals an evolutionary link between aquareoviruses and coltiviruses.</title>
        <authorList>
            <person name="Mohd Jaafar F."/>
            <person name="Goodwin A.E."/>
            <person name="Belhouchet M."/>
            <person name="Merry G."/>
            <person name="Fang Q."/>
            <person name="Cantaloube J.F."/>
            <person name="Biagini P."/>
            <person name="de Micco P."/>
            <person name="Mertens P.P."/>
            <person name="Attoui H."/>
        </authorList>
    </citation>
    <scope>NUCLEOTIDE SEQUENCE [GENOMIC RNA]</scope>
</reference>
<keyword id="KW-1185">Reference proteome</keyword>
<evidence type="ECO:0000256" key="1">
    <source>
        <dbReference type="SAM" id="MobiDB-lite"/>
    </source>
</evidence>
<evidence type="ECO:0000305" key="2"/>
<protein>
    <recommendedName>
        <fullName>Non-structural protein 4</fullName>
        <shortName>NS4</shortName>
    </recommendedName>
    <alternativeName>
        <fullName>NS31</fullName>
    </alternativeName>
</protein>
<proteinExistence type="inferred from homology"/>
<organism>
    <name type="scientific">Aquareovirus G (isolate American grass carp/USA/PB01-155/-)</name>
    <name type="common">AQRV-G</name>
    <dbReference type="NCBI Taxonomy" id="648234"/>
    <lineage>
        <taxon>Viruses</taxon>
        <taxon>Riboviria</taxon>
        <taxon>Orthornavirae</taxon>
        <taxon>Duplornaviricota</taxon>
        <taxon>Resentoviricetes</taxon>
        <taxon>Reovirales</taxon>
        <taxon>Spinareoviridae</taxon>
        <taxon>Aquareovirus</taxon>
        <taxon>Aquareovirus graminis</taxon>
    </lineage>
</organism>
<organismHost>
    <name type="scientific">Ctenopharyngodon idella</name>
    <name type="common">Grass carp</name>
    <name type="synonym">Leuciscus idella</name>
    <dbReference type="NCBI Taxonomy" id="7959"/>
</organismHost>
<gene>
    <name type="primary">S7</name>
</gene>
<comment type="similarity">
    <text evidence="2">Belongs to the aquareoviridae NS4 protein family.</text>
</comment>